<accession>C1DE76</accession>
<proteinExistence type="inferred from homology"/>
<reference key="1">
    <citation type="journal article" date="2009" name="J. Bacteriol.">
        <title>Genome sequence of Azotobacter vinelandii, an obligate aerobe specialized to support diverse anaerobic metabolic processes.</title>
        <authorList>
            <person name="Setubal J.C."/>
            <person name="Dos Santos P."/>
            <person name="Goldman B.S."/>
            <person name="Ertesvaag H."/>
            <person name="Espin G."/>
            <person name="Rubio L.M."/>
            <person name="Valla S."/>
            <person name="Almeida N.F."/>
            <person name="Balasubramanian D."/>
            <person name="Cromes L."/>
            <person name="Curatti L."/>
            <person name="Du Z."/>
            <person name="Godsy E."/>
            <person name="Goodner B."/>
            <person name="Hellner-Burris K."/>
            <person name="Hernandez J.A."/>
            <person name="Houmiel K."/>
            <person name="Imperial J."/>
            <person name="Kennedy C."/>
            <person name="Larson T.J."/>
            <person name="Latreille P."/>
            <person name="Ligon L.S."/>
            <person name="Lu J."/>
            <person name="Maerk M."/>
            <person name="Miller N.M."/>
            <person name="Norton S."/>
            <person name="O'Carroll I.P."/>
            <person name="Paulsen I."/>
            <person name="Raulfs E.C."/>
            <person name="Roemer R."/>
            <person name="Rosser J."/>
            <person name="Segura D."/>
            <person name="Slater S."/>
            <person name="Stricklin S.L."/>
            <person name="Studholme D.J."/>
            <person name="Sun J."/>
            <person name="Viana C.J."/>
            <person name="Wallin E."/>
            <person name="Wang B."/>
            <person name="Wheeler C."/>
            <person name="Zhu H."/>
            <person name="Dean D.R."/>
            <person name="Dixon R."/>
            <person name="Wood D."/>
        </authorList>
    </citation>
    <scope>NUCLEOTIDE SEQUENCE [LARGE SCALE GENOMIC DNA]</scope>
    <source>
        <strain>DJ / ATCC BAA-1303</strain>
    </source>
</reference>
<gene>
    <name evidence="1" type="primary">tgt</name>
    <name type="ordered locus">Avin_40480</name>
</gene>
<comment type="function">
    <text evidence="1">Catalyzes the base-exchange of a guanine (G) residue with the queuine precursor 7-aminomethyl-7-deazaguanine (PreQ1) at position 34 (anticodon wobble position) in tRNAs with GU(N) anticodons (tRNA-Asp, -Asn, -His and -Tyr). Catalysis occurs through a double-displacement mechanism. The nucleophile active site attacks the C1' of nucleotide 34 to detach the guanine base from the RNA, forming a covalent enzyme-RNA intermediate. The proton acceptor active site deprotonates the incoming PreQ1, allowing a nucleophilic attack on the C1' of the ribose to form the product. After dissociation, two additional enzymatic reactions on the tRNA convert PreQ1 to queuine (Q), resulting in the hypermodified nucleoside queuosine (7-(((4,5-cis-dihydroxy-2-cyclopenten-1-yl)amino)methyl)-7-deazaguanosine).</text>
</comment>
<comment type="catalytic activity">
    <reaction evidence="1">
        <text>7-aminomethyl-7-carbaguanine + guanosine(34) in tRNA = 7-aminomethyl-7-carbaguanosine(34) in tRNA + guanine</text>
        <dbReference type="Rhea" id="RHEA:24104"/>
        <dbReference type="Rhea" id="RHEA-COMP:10341"/>
        <dbReference type="Rhea" id="RHEA-COMP:10342"/>
        <dbReference type="ChEBI" id="CHEBI:16235"/>
        <dbReference type="ChEBI" id="CHEBI:58703"/>
        <dbReference type="ChEBI" id="CHEBI:74269"/>
        <dbReference type="ChEBI" id="CHEBI:82833"/>
        <dbReference type="EC" id="2.4.2.29"/>
    </reaction>
</comment>
<comment type="cofactor">
    <cofactor evidence="1">
        <name>Zn(2+)</name>
        <dbReference type="ChEBI" id="CHEBI:29105"/>
    </cofactor>
    <text evidence="1">Binds 1 zinc ion per subunit.</text>
</comment>
<comment type="pathway">
    <text evidence="1">tRNA modification; tRNA-queuosine biosynthesis.</text>
</comment>
<comment type="subunit">
    <text evidence="1">Homodimer. Within each dimer, one monomer is responsible for RNA recognition and catalysis, while the other monomer binds to the replacement base PreQ1.</text>
</comment>
<comment type="similarity">
    <text evidence="1">Belongs to the queuine tRNA-ribosyltransferase family.</text>
</comment>
<organism>
    <name type="scientific">Azotobacter vinelandii (strain DJ / ATCC BAA-1303)</name>
    <dbReference type="NCBI Taxonomy" id="322710"/>
    <lineage>
        <taxon>Bacteria</taxon>
        <taxon>Pseudomonadati</taxon>
        <taxon>Pseudomonadota</taxon>
        <taxon>Gammaproteobacteria</taxon>
        <taxon>Pseudomonadales</taxon>
        <taxon>Pseudomonadaceae</taxon>
        <taxon>Azotobacter</taxon>
    </lineage>
</organism>
<name>TGT_AZOVD</name>
<feature type="chain" id="PRO_1000203648" description="Queuine tRNA-ribosyltransferase">
    <location>
        <begin position="1"/>
        <end position="371"/>
    </location>
</feature>
<feature type="region of interest" description="RNA binding" evidence="1">
    <location>
        <begin position="243"/>
        <end position="249"/>
    </location>
</feature>
<feature type="region of interest" description="RNA binding; important for wobble base 34 recognition" evidence="1">
    <location>
        <begin position="267"/>
        <end position="271"/>
    </location>
</feature>
<feature type="active site" description="Proton acceptor" evidence="1">
    <location>
        <position position="89"/>
    </location>
</feature>
<feature type="active site" description="Nucleophile" evidence="1">
    <location>
        <position position="262"/>
    </location>
</feature>
<feature type="binding site" evidence="1">
    <location>
        <begin position="89"/>
        <end position="93"/>
    </location>
    <ligand>
        <name>substrate</name>
    </ligand>
</feature>
<feature type="binding site" evidence="1">
    <location>
        <position position="143"/>
    </location>
    <ligand>
        <name>substrate</name>
    </ligand>
</feature>
<feature type="binding site" evidence="1">
    <location>
        <position position="185"/>
    </location>
    <ligand>
        <name>substrate</name>
    </ligand>
</feature>
<feature type="binding site" evidence="1">
    <location>
        <position position="212"/>
    </location>
    <ligand>
        <name>substrate</name>
    </ligand>
</feature>
<feature type="binding site" evidence="1">
    <location>
        <position position="300"/>
    </location>
    <ligand>
        <name>Zn(2+)</name>
        <dbReference type="ChEBI" id="CHEBI:29105"/>
    </ligand>
</feature>
<feature type="binding site" evidence="1">
    <location>
        <position position="302"/>
    </location>
    <ligand>
        <name>Zn(2+)</name>
        <dbReference type="ChEBI" id="CHEBI:29105"/>
    </ligand>
</feature>
<feature type="binding site" evidence="1">
    <location>
        <position position="305"/>
    </location>
    <ligand>
        <name>Zn(2+)</name>
        <dbReference type="ChEBI" id="CHEBI:29105"/>
    </ligand>
</feature>
<feature type="binding site" evidence="1">
    <location>
        <position position="331"/>
    </location>
    <ligand>
        <name>Zn(2+)</name>
        <dbReference type="ChEBI" id="CHEBI:29105"/>
    </ligand>
</feature>
<protein>
    <recommendedName>
        <fullName evidence="1">Queuine tRNA-ribosyltransferase</fullName>
        <ecNumber evidence="1">2.4.2.29</ecNumber>
    </recommendedName>
    <alternativeName>
        <fullName evidence="1">Guanine insertion enzyme</fullName>
    </alternativeName>
    <alternativeName>
        <fullName evidence="1">tRNA-guanine transglycosylase</fullName>
    </alternativeName>
</protein>
<evidence type="ECO:0000255" key="1">
    <source>
        <dbReference type="HAMAP-Rule" id="MF_00168"/>
    </source>
</evidence>
<keyword id="KW-0328">Glycosyltransferase</keyword>
<keyword id="KW-0479">Metal-binding</keyword>
<keyword id="KW-0671">Queuosine biosynthesis</keyword>
<keyword id="KW-0808">Transferase</keyword>
<keyword id="KW-0819">tRNA processing</keyword>
<keyword id="KW-0862">Zinc</keyword>
<sequence length="371" mass="41394">MTFELLATDGKARRGRLTFPRGVVETPAFMPVGTYGTVKGMLPRDIEAIGAQIILGNTFHLWLRPGTEVIRRHGDLHDFMQWHGPILTDSGGFQVFSLGALRKIREEGVYFASPVDGAKVFMGPEESMRVQRDLGSDVVMIFDECTPYPADEEVARRSMELSLRWAGRSKIAHEGNPAALFGIVQGGMHEDLRLRSLDGLEEIGFDGLAIGGLSVGEPKEEMIRVLDFLPPRLPADKPRYLMGVGKPEDLVEGVRRGIDMFDCVMPTRNARNGHLFVDSGVLKIRNAVHRHDESPLDPACDCHTCKHFSRAYLHHLDKCGEMLGSMLNTIHNLRHYQRLMTGLREAIQQGKLAAFVDTFYARRGLPVPPLT</sequence>
<dbReference type="EC" id="2.4.2.29" evidence="1"/>
<dbReference type="EMBL" id="CP001157">
    <property type="protein sequence ID" value="ACO80184.1"/>
    <property type="molecule type" value="Genomic_DNA"/>
</dbReference>
<dbReference type="RefSeq" id="WP_012702559.1">
    <property type="nucleotide sequence ID" value="NC_012560.1"/>
</dbReference>
<dbReference type="SMR" id="C1DE76"/>
<dbReference type="STRING" id="322710.Avin_40480"/>
<dbReference type="EnsemblBacteria" id="ACO80184">
    <property type="protein sequence ID" value="ACO80184"/>
    <property type="gene ID" value="Avin_40480"/>
</dbReference>
<dbReference type="GeneID" id="88186991"/>
<dbReference type="KEGG" id="avn:Avin_40480"/>
<dbReference type="eggNOG" id="COG0343">
    <property type="taxonomic scope" value="Bacteria"/>
</dbReference>
<dbReference type="HOGENOM" id="CLU_022060_0_1_6"/>
<dbReference type="OrthoDB" id="9805417at2"/>
<dbReference type="UniPathway" id="UPA00392"/>
<dbReference type="Proteomes" id="UP000002424">
    <property type="component" value="Chromosome"/>
</dbReference>
<dbReference type="GO" id="GO:0005829">
    <property type="term" value="C:cytosol"/>
    <property type="evidence" value="ECO:0007669"/>
    <property type="project" value="TreeGrafter"/>
</dbReference>
<dbReference type="GO" id="GO:0046872">
    <property type="term" value="F:metal ion binding"/>
    <property type="evidence" value="ECO:0007669"/>
    <property type="project" value="UniProtKB-KW"/>
</dbReference>
<dbReference type="GO" id="GO:0008479">
    <property type="term" value="F:tRNA-guanosine(34) queuine transglycosylase activity"/>
    <property type="evidence" value="ECO:0007669"/>
    <property type="project" value="UniProtKB-UniRule"/>
</dbReference>
<dbReference type="GO" id="GO:0008616">
    <property type="term" value="P:queuosine biosynthetic process"/>
    <property type="evidence" value="ECO:0007669"/>
    <property type="project" value="UniProtKB-UniRule"/>
</dbReference>
<dbReference type="GO" id="GO:0002099">
    <property type="term" value="P:tRNA wobble guanine modification"/>
    <property type="evidence" value="ECO:0007669"/>
    <property type="project" value="TreeGrafter"/>
</dbReference>
<dbReference type="GO" id="GO:0101030">
    <property type="term" value="P:tRNA-guanine transglycosylation"/>
    <property type="evidence" value="ECO:0007669"/>
    <property type="project" value="InterPro"/>
</dbReference>
<dbReference type="FunFam" id="3.20.20.105:FF:000001">
    <property type="entry name" value="Queuine tRNA-ribosyltransferase"/>
    <property type="match status" value="1"/>
</dbReference>
<dbReference type="Gene3D" id="3.20.20.105">
    <property type="entry name" value="Queuine tRNA-ribosyltransferase-like"/>
    <property type="match status" value="1"/>
</dbReference>
<dbReference type="HAMAP" id="MF_00168">
    <property type="entry name" value="Q_tRNA_Tgt"/>
    <property type="match status" value="1"/>
</dbReference>
<dbReference type="InterPro" id="IPR050076">
    <property type="entry name" value="ArchSynthase1/Queuine_TRR"/>
</dbReference>
<dbReference type="InterPro" id="IPR004803">
    <property type="entry name" value="TGT"/>
</dbReference>
<dbReference type="InterPro" id="IPR036511">
    <property type="entry name" value="TGT-like_sf"/>
</dbReference>
<dbReference type="InterPro" id="IPR002616">
    <property type="entry name" value="tRNA_ribo_trans-like"/>
</dbReference>
<dbReference type="NCBIfam" id="TIGR00430">
    <property type="entry name" value="Q_tRNA_tgt"/>
    <property type="match status" value="1"/>
</dbReference>
<dbReference type="NCBIfam" id="TIGR00449">
    <property type="entry name" value="tgt_general"/>
    <property type="match status" value="1"/>
</dbReference>
<dbReference type="PANTHER" id="PTHR46499">
    <property type="entry name" value="QUEUINE TRNA-RIBOSYLTRANSFERASE"/>
    <property type="match status" value="1"/>
</dbReference>
<dbReference type="PANTHER" id="PTHR46499:SF1">
    <property type="entry name" value="QUEUINE TRNA-RIBOSYLTRANSFERASE"/>
    <property type="match status" value="1"/>
</dbReference>
<dbReference type="Pfam" id="PF01702">
    <property type="entry name" value="TGT"/>
    <property type="match status" value="1"/>
</dbReference>
<dbReference type="SUPFAM" id="SSF51713">
    <property type="entry name" value="tRNA-guanine transglycosylase"/>
    <property type="match status" value="1"/>
</dbReference>